<organism>
    <name type="scientific">Escherichia coli O157:H7</name>
    <dbReference type="NCBI Taxonomy" id="83334"/>
    <lineage>
        <taxon>Bacteria</taxon>
        <taxon>Pseudomonadati</taxon>
        <taxon>Pseudomonadota</taxon>
        <taxon>Gammaproteobacteria</taxon>
        <taxon>Enterobacterales</taxon>
        <taxon>Enterobacteriaceae</taxon>
        <taxon>Escherichia</taxon>
    </lineage>
</organism>
<proteinExistence type="inferred from homology"/>
<protein>
    <recommendedName>
        <fullName evidence="1">Tyrosine recombinase XerC</fullName>
    </recommendedName>
</protein>
<evidence type="ECO:0000255" key="1">
    <source>
        <dbReference type="HAMAP-Rule" id="MF_01808"/>
    </source>
</evidence>
<evidence type="ECO:0000255" key="2">
    <source>
        <dbReference type="PROSITE-ProRule" id="PRU01246"/>
    </source>
</evidence>
<evidence type="ECO:0000255" key="3">
    <source>
        <dbReference type="PROSITE-ProRule" id="PRU01248"/>
    </source>
</evidence>
<reference key="1">
    <citation type="journal article" date="2001" name="Nature">
        <title>Genome sequence of enterohaemorrhagic Escherichia coli O157:H7.</title>
        <authorList>
            <person name="Perna N.T."/>
            <person name="Plunkett G. III"/>
            <person name="Burland V."/>
            <person name="Mau B."/>
            <person name="Glasner J.D."/>
            <person name="Rose D.J."/>
            <person name="Mayhew G.F."/>
            <person name="Evans P.S."/>
            <person name="Gregor J."/>
            <person name="Kirkpatrick H.A."/>
            <person name="Posfai G."/>
            <person name="Hackett J."/>
            <person name="Klink S."/>
            <person name="Boutin A."/>
            <person name="Shao Y."/>
            <person name="Miller L."/>
            <person name="Grotbeck E.J."/>
            <person name="Davis N.W."/>
            <person name="Lim A."/>
            <person name="Dimalanta E.T."/>
            <person name="Potamousis K."/>
            <person name="Apodaca J."/>
            <person name="Anantharaman T.S."/>
            <person name="Lin J."/>
            <person name="Yen G."/>
            <person name="Schwartz D.C."/>
            <person name="Welch R.A."/>
            <person name="Blattner F.R."/>
        </authorList>
    </citation>
    <scope>NUCLEOTIDE SEQUENCE [LARGE SCALE GENOMIC DNA]</scope>
    <source>
        <strain>O157:H7 / EDL933 / ATCC 700927 / EHEC</strain>
    </source>
</reference>
<reference key="2">
    <citation type="journal article" date="2001" name="DNA Res.">
        <title>Complete genome sequence of enterohemorrhagic Escherichia coli O157:H7 and genomic comparison with a laboratory strain K-12.</title>
        <authorList>
            <person name="Hayashi T."/>
            <person name="Makino K."/>
            <person name="Ohnishi M."/>
            <person name="Kurokawa K."/>
            <person name="Ishii K."/>
            <person name="Yokoyama K."/>
            <person name="Han C.-G."/>
            <person name="Ohtsubo E."/>
            <person name="Nakayama K."/>
            <person name="Murata T."/>
            <person name="Tanaka M."/>
            <person name="Tobe T."/>
            <person name="Iida T."/>
            <person name="Takami H."/>
            <person name="Honda T."/>
            <person name="Sasakawa C."/>
            <person name="Ogasawara N."/>
            <person name="Yasunaga T."/>
            <person name="Kuhara S."/>
            <person name="Shiba T."/>
            <person name="Hattori M."/>
            <person name="Shinagawa H."/>
        </authorList>
    </citation>
    <scope>NUCLEOTIDE SEQUENCE [LARGE SCALE GENOMIC DNA]</scope>
    <source>
        <strain>O157:H7 / Sakai / RIMD 0509952 / EHEC</strain>
    </source>
</reference>
<accession>Q8X4T6</accession>
<dbReference type="EMBL" id="AE005174">
    <property type="protein sequence ID" value="AAG59004.1"/>
    <property type="molecule type" value="Genomic_DNA"/>
</dbReference>
<dbReference type="EMBL" id="BA000007">
    <property type="protein sequence ID" value="BAB38164.1"/>
    <property type="molecule type" value="Genomic_DNA"/>
</dbReference>
<dbReference type="PIR" id="E91221">
    <property type="entry name" value="E91221"/>
</dbReference>
<dbReference type="PIR" id="H86067">
    <property type="entry name" value="H86067"/>
</dbReference>
<dbReference type="RefSeq" id="NP_312768.1">
    <property type="nucleotide sequence ID" value="NC_002695.1"/>
</dbReference>
<dbReference type="RefSeq" id="WP_000130682.1">
    <property type="nucleotide sequence ID" value="NZ_VOAI01000017.1"/>
</dbReference>
<dbReference type="SMR" id="Q8X4T6"/>
<dbReference type="STRING" id="155864.Z5328"/>
<dbReference type="GeneID" id="912638"/>
<dbReference type="KEGG" id="ece:Z5328"/>
<dbReference type="KEGG" id="ecs:ECs_4741"/>
<dbReference type="PATRIC" id="fig|386585.9.peg.4948"/>
<dbReference type="eggNOG" id="COG4973">
    <property type="taxonomic scope" value="Bacteria"/>
</dbReference>
<dbReference type="HOGENOM" id="CLU_027562_9_0_6"/>
<dbReference type="OMA" id="AMMELMY"/>
<dbReference type="Proteomes" id="UP000000558">
    <property type="component" value="Chromosome"/>
</dbReference>
<dbReference type="Proteomes" id="UP000002519">
    <property type="component" value="Chromosome"/>
</dbReference>
<dbReference type="GO" id="GO:0005737">
    <property type="term" value="C:cytoplasm"/>
    <property type="evidence" value="ECO:0007669"/>
    <property type="project" value="UniProtKB-SubCell"/>
</dbReference>
<dbReference type="GO" id="GO:0003677">
    <property type="term" value="F:DNA binding"/>
    <property type="evidence" value="ECO:0007669"/>
    <property type="project" value="UniProtKB-KW"/>
</dbReference>
<dbReference type="GO" id="GO:0009037">
    <property type="term" value="F:tyrosine-based site-specific recombinase activity"/>
    <property type="evidence" value="ECO:0007669"/>
    <property type="project" value="UniProtKB-UniRule"/>
</dbReference>
<dbReference type="GO" id="GO:0051301">
    <property type="term" value="P:cell division"/>
    <property type="evidence" value="ECO:0007669"/>
    <property type="project" value="UniProtKB-KW"/>
</dbReference>
<dbReference type="GO" id="GO:0007059">
    <property type="term" value="P:chromosome segregation"/>
    <property type="evidence" value="ECO:0007669"/>
    <property type="project" value="UniProtKB-UniRule"/>
</dbReference>
<dbReference type="GO" id="GO:0006313">
    <property type="term" value="P:DNA transposition"/>
    <property type="evidence" value="ECO:0007669"/>
    <property type="project" value="UniProtKB-UniRule"/>
</dbReference>
<dbReference type="CDD" id="cd00798">
    <property type="entry name" value="INT_XerDC_C"/>
    <property type="match status" value="1"/>
</dbReference>
<dbReference type="FunFam" id="1.10.443.10:FF:000002">
    <property type="entry name" value="Tyrosine recombinase XerC"/>
    <property type="match status" value="1"/>
</dbReference>
<dbReference type="Gene3D" id="1.10.150.130">
    <property type="match status" value="1"/>
</dbReference>
<dbReference type="Gene3D" id="1.10.443.10">
    <property type="entry name" value="Intergrase catalytic core"/>
    <property type="match status" value="1"/>
</dbReference>
<dbReference type="HAMAP" id="MF_01808">
    <property type="entry name" value="Recomb_XerC_XerD"/>
    <property type="match status" value="1"/>
</dbReference>
<dbReference type="InterPro" id="IPR044068">
    <property type="entry name" value="CB"/>
</dbReference>
<dbReference type="InterPro" id="IPR011010">
    <property type="entry name" value="DNA_brk_join_enz"/>
</dbReference>
<dbReference type="InterPro" id="IPR013762">
    <property type="entry name" value="Integrase-like_cat_sf"/>
</dbReference>
<dbReference type="InterPro" id="IPR002104">
    <property type="entry name" value="Integrase_catalytic"/>
</dbReference>
<dbReference type="InterPro" id="IPR010998">
    <property type="entry name" value="Integrase_recombinase_N"/>
</dbReference>
<dbReference type="InterPro" id="IPR004107">
    <property type="entry name" value="Integrase_SAM-like_N"/>
</dbReference>
<dbReference type="InterPro" id="IPR011931">
    <property type="entry name" value="Recomb_XerC"/>
</dbReference>
<dbReference type="InterPro" id="IPR023009">
    <property type="entry name" value="Tyrosine_recombinase_XerC/XerD"/>
</dbReference>
<dbReference type="InterPro" id="IPR050090">
    <property type="entry name" value="Tyrosine_recombinase_XerCD"/>
</dbReference>
<dbReference type="NCBIfam" id="NF001399">
    <property type="entry name" value="PRK00283.1"/>
    <property type="match status" value="1"/>
</dbReference>
<dbReference type="NCBIfam" id="TIGR02224">
    <property type="entry name" value="recomb_XerC"/>
    <property type="match status" value="1"/>
</dbReference>
<dbReference type="PANTHER" id="PTHR30349">
    <property type="entry name" value="PHAGE INTEGRASE-RELATED"/>
    <property type="match status" value="1"/>
</dbReference>
<dbReference type="PANTHER" id="PTHR30349:SF81">
    <property type="entry name" value="TYROSINE RECOMBINASE XERC"/>
    <property type="match status" value="1"/>
</dbReference>
<dbReference type="Pfam" id="PF02899">
    <property type="entry name" value="Phage_int_SAM_1"/>
    <property type="match status" value="1"/>
</dbReference>
<dbReference type="Pfam" id="PF00589">
    <property type="entry name" value="Phage_integrase"/>
    <property type="match status" value="1"/>
</dbReference>
<dbReference type="SUPFAM" id="SSF56349">
    <property type="entry name" value="DNA breaking-rejoining enzymes"/>
    <property type="match status" value="1"/>
</dbReference>
<dbReference type="SUPFAM" id="SSF47823">
    <property type="entry name" value="lambda integrase-like, N-terminal domain"/>
    <property type="match status" value="1"/>
</dbReference>
<dbReference type="PROSITE" id="PS51900">
    <property type="entry name" value="CB"/>
    <property type="match status" value="1"/>
</dbReference>
<dbReference type="PROSITE" id="PS51898">
    <property type="entry name" value="TYR_RECOMBINASE"/>
    <property type="match status" value="1"/>
</dbReference>
<feature type="chain" id="PRO_0000095296" description="Tyrosine recombinase XerC">
    <location>
        <begin position="1"/>
        <end position="298"/>
    </location>
</feature>
<feature type="domain" description="Core-binding (CB)" evidence="3">
    <location>
        <begin position="2"/>
        <end position="88"/>
    </location>
</feature>
<feature type="domain" description="Tyr recombinase" evidence="2">
    <location>
        <begin position="109"/>
        <end position="288"/>
    </location>
</feature>
<feature type="active site" evidence="1">
    <location>
        <position position="148"/>
    </location>
</feature>
<feature type="active site" evidence="1">
    <location>
        <position position="172"/>
    </location>
</feature>
<feature type="active site" evidence="1">
    <location>
        <position position="240"/>
    </location>
</feature>
<feature type="active site" evidence="1">
    <location>
        <position position="243"/>
    </location>
</feature>
<feature type="active site" evidence="1">
    <location>
        <position position="266"/>
    </location>
</feature>
<feature type="active site" description="O-(3'-phospho-DNA)-tyrosine intermediate" evidence="1">
    <location>
        <position position="275"/>
    </location>
</feature>
<keyword id="KW-0131">Cell cycle</keyword>
<keyword id="KW-0132">Cell division</keyword>
<keyword id="KW-0159">Chromosome partition</keyword>
<keyword id="KW-0963">Cytoplasm</keyword>
<keyword id="KW-0229">DNA integration</keyword>
<keyword id="KW-0233">DNA recombination</keyword>
<keyword id="KW-0238">DNA-binding</keyword>
<keyword id="KW-1185">Reference proteome</keyword>
<sequence>MTDLHTDVERYLRYLSVERQLSPITLLNYQRQLEAIINFASENGLQNWQQCDAAMVRNFAVRSRRKGLGAASLALRLSALRSFFDWLVSQNELKANPAKGVSAPKTPRHLPKNIDVDDINRLLDIDINDPLAVRDRAMLEVMYGAGLRLSELVGLDIKHLDLESGEVWVMGKGSKERRLPIGRNALSWIEHWLDLRDLFGSEDDALFLSKLGKRISARNVQKRFAEWGIKQGLNNHVHPHKLRHSFATHMLESSGDLRGVQELLGHANLSTTQIYTHLDFQHLASVYDAAHPRAKRGK</sequence>
<gene>
    <name evidence="1" type="primary">xerC</name>
    <name type="ordered locus">Z5328</name>
    <name type="ordered locus">ECs4741</name>
</gene>
<name>XERC_ECO57</name>
<comment type="function">
    <text evidence="1">Site-specific tyrosine recombinase, which acts by catalyzing the cutting and rejoining of the recombining DNA molecules. Binds cooperatively to specific DNA consensus sequences that are separated from XerD binding sites by a short central region, forming the heterotetrameric XerC-XerD complex that recombines DNA substrates. The complex is essential to convert dimers of the bacterial chromosome into monomers to permit their segregation at cell division. It also contributes to the segregational stability of plasmids. In the complex XerC specifically exchanges the top DNA strands.</text>
</comment>
<comment type="activity regulation">
    <text evidence="1">FtsK may regulate the catalytic switch between XerC and XerD in the heterotetrameric complex during the two steps of the recombination process.</text>
</comment>
<comment type="subunit">
    <text evidence="1">Forms a cyclic heterotetrameric complex composed of two molecules of XerC and two molecules of XerD, in which XerC interacts with XerD via its C-terminal region, XerD interacts with XerC via its C-terminal region and so on.</text>
</comment>
<comment type="subcellular location">
    <subcellularLocation>
        <location evidence="1">Cytoplasm</location>
    </subcellularLocation>
</comment>
<comment type="similarity">
    <text evidence="1">Belongs to the 'phage' integrase family. XerC subfamily.</text>
</comment>